<keyword id="KW-0233">DNA recombination</keyword>
<keyword id="KW-0238">DNA-binding</keyword>
<keyword id="KW-0814">Transposable element</keyword>
<keyword id="KW-0815">Transposition</keyword>
<dbReference type="EMBL" id="BA000033">
    <property type="protein sequence ID" value="BAB93892.1"/>
    <property type="molecule type" value="Genomic_DNA"/>
</dbReference>
<dbReference type="RefSeq" id="WP_001106057.1">
    <property type="nucleotide sequence ID" value="NC_003923.1"/>
</dbReference>
<dbReference type="SMR" id="P0A045"/>
<dbReference type="KEGG" id="sam:MW0027"/>
<dbReference type="HOGENOM" id="CLU_067322_1_0_9"/>
<dbReference type="GO" id="GO:0003677">
    <property type="term" value="F:DNA binding"/>
    <property type="evidence" value="ECO:0007669"/>
    <property type="project" value="UniProtKB-KW"/>
</dbReference>
<dbReference type="GO" id="GO:0015074">
    <property type="term" value="P:DNA integration"/>
    <property type="evidence" value="ECO:0007669"/>
    <property type="project" value="InterPro"/>
</dbReference>
<dbReference type="GO" id="GO:0006310">
    <property type="term" value="P:DNA recombination"/>
    <property type="evidence" value="ECO:0007669"/>
    <property type="project" value="UniProtKB-KW"/>
</dbReference>
<dbReference type="GO" id="GO:0032196">
    <property type="term" value="P:transposition"/>
    <property type="evidence" value="ECO:0007669"/>
    <property type="project" value="UniProtKB-KW"/>
</dbReference>
<dbReference type="Gene3D" id="3.30.420.10">
    <property type="entry name" value="Ribonuclease H-like superfamily/Ribonuclease H"/>
    <property type="match status" value="1"/>
</dbReference>
<dbReference type="InterPro" id="IPR032874">
    <property type="entry name" value="DDE_dom"/>
</dbReference>
<dbReference type="InterPro" id="IPR001584">
    <property type="entry name" value="Integrase_cat-core"/>
</dbReference>
<dbReference type="InterPro" id="IPR052183">
    <property type="entry name" value="IS_Transposase"/>
</dbReference>
<dbReference type="InterPro" id="IPR012337">
    <property type="entry name" value="RNaseH-like_sf"/>
</dbReference>
<dbReference type="InterPro" id="IPR036397">
    <property type="entry name" value="RNaseH_sf"/>
</dbReference>
<dbReference type="InterPro" id="IPR047930">
    <property type="entry name" value="Transpos_IS6"/>
</dbReference>
<dbReference type="NCBIfam" id="NF033587">
    <property type="entry name" value="transpos_IS6"/>
    <property type="match status" value="1"/>
</dbReference>
<dbReference type="PANTHER" id="PTHR35528">
    <property type="entry name" value="BLL1675 PROTEIN"/>
    <property type="match status" value="1"/>
</dbReference>
<dbReference type="PANTHER" id="PTHR35528:SF3">
    <property type="entry name" value="BLL1675 PROTEIN"/>
    <property type="match status" value="1"/>
</dbReference>
<dbReference type="Pfam" id="PF13610">
    <property type="entry name" value="DDE_Tnp_IS240"/>
    <property type="match status" value="1"/>
</dbReference>
<dbReference type="SUPFAM" id="SSF53098">
    <property type="entry name" value="Ribonuclease H-like"/>
    <property type="match status" value="1"/>
</dbReference>
<dbReference type="PROSITE" id="PS50994">
    <property type="entry name" value="INTEGRASE"/>
    <property type="match status" value="1"/>
</dbReference>
<reference key="1">
    <citation type="journal article" date="2002" name="Lancet">
        <title>Genome and virulence determinants of high virulence community-acquired MRSA.</title>
        <authorList>
            <person name="Baba T."/>
            <person name="Takeuchi F."/>
            <person name="Kuroda M."/>
            <person name="Yuzawa H."/>
            <person name="Aoki K."/>
            <person name="Oguchi A."/>
            <person name="Nagai Y."/>
            <person name="Iwama N."/>
            <person name="Asano K."/>
            <person name="Naimi T."/>
            <person name="Kuroda H."/>
            <person name="Cui L."/>
            <person name="Yamamoto K."/>
            <person name="Hiramatsu K."/>
        </authorList>
    </citation>
    <scope>NUCLEOTIDE SEQUENCE [LARGE SCALE GENOMIC DNA]</scope>
    <source>
        <strain>MW2</strain>
    </source>
</reference>
<protein>
    <recommendedName>
        <fullName>Transposase for insertion sequence-like element IS431mec</fullName>
    </recommendedName>
</protein>
<feature type="chain" id="PRO_0000075438" description="Transposase for insertion sequence-like element IS431mec">
    <location>
        <begin position="1"/>
        <end position="224"/>
    </location>
</feature>
<feature type="domain" description="Integrase catalytic" evidence="3">
    <location>
        <begin position="73"/>
        <end position="222"/>
    </location>
</feature>
<feature type="DNA-binding region" description="H-T-H motif" evidence="2">
    <location>
        <begin position="33"/>
        <end position="52"/>
    </location>
</feature>
<name>T431_STAAW</name>
<organism>
    <name type="scientific">Staphylococcus aureus (strain MW2)</name>
    <dbReference type="NCBI Taxonomy" id="196620"/>
    <lineage>
        <taxon>Bacteria</taxon>
        <taxon>Bacillati</taxon>
        <taxon>Bacillota</taxon>
        <taxon>Bacilli</taxon>
        <taxon>Bacillales</taxon>
        <taxon>Staphylococcaceae</taxon>
        <taxon>Staphylococcus</taxon>
    </lineage>
</organism>
<sequence length="224" mass="26915">MNYFRYKQFNKDVITVAVGYYLRYTLSYRDISEILRERGVNVHHSTVYRWVQEYAPILYQIWKKKHKKAYYKWRIDETYIKIKGKWSYLYRAIDAEGHTLDIWLRKQRDNHSAYAFIKRLIKQFGKPQKVITDQAPSTKVAMAKVIKAFKLKPDCHCTSKYLNNLIEQDHRHIKVRKTRYQSINTAKNTLKGIECIYALYKKNRRSLQIYGFSPCHEISIMLAS</sequence>
<evidence type="ECO:0000250" key="1"/>
<evidence type="ECO:0000255" key="2"/>
<evidence type="ECO:0000255" key="3">
    <source>
        <dbReference type="PROSITE-ProRule" id="PRU00457"/>
    </source>
</evidence>
<accession>P0A045</accession>
<accession>P19380</accession>
<gene>
    <name type="primary">tnp</name>
    <name type="ordered locus">MW0027</name>
</gene>
<proteinExistence type="inferred from homology"/>
<comment type="function">
    <text evidence="1">Involved in the transposition of the insertion sequence.</text>
</comment>